<protein>
    <recommendedName>
        <fullName evidence="1 3">Coproheme decarboxylase</fullName>
        <ecNumber evidence="1">1.3.98.5</ecNumber>
    </recommendedName>
    <alternativeName>
        <fullName evidence="1 3">Coproheme III oxidative decarboxylase</fullName>
    </alternativeName>
    <alternativeName>
        <fullName evidence="1 3">Hydrogen peroxide-dependent heme synthase</fullName>
    </alternativeName>
</protein>
<sequence length="249" mass="28906">MERHVPEPTHTLEGWHVLHDFRLLDFARWFSAPLEAREDAWEELKGLVREWRELEEAGQGSYGIYQVVGHKADLLFLNLRPGLDPLLEAEARLSRSAFARYLGRSYSFYSVVELGSQEKPLDPESPYVKPRLTPRVPKSGYVCFYPMNKRRQGQDNWYMLPAKERASLMKAHGETGRKYQGKVMQVISGAQGLDDWEWGVDLFSEDPVQFKKIVYEMRFDEVSARYGEFGPFFVGKYLDEEALRAFLGL</sequence>
<organism>
    <name type="scientific">Thermus thermophilus (strain ATCC 27634 / DSM 579 / HB8)</name>
    <dbReference type="NCBI Taxonomy" id="300852"/>
    <lineage>
        <taxon>Bacteria</taxon>
        <taxon>Thermotogati</taxon>
        <taxon>Deinococcota</taxon>
        <taxon>Deinococci</taxon>
        <taxon>Thermales</taxon>
        <taxon>Thermaceae</taxon>
        <taxon>Thermus</taxon>
    </lineage>
</organism>
<accession>Q5SHL6</accession>
<evidence type="ECO:0000255" key="1">
    <source>
        <dbReference type="HAMAP-Rule" id="MF_01442"/>
    </source>
</evidence>
<evidence type="ECO:0000269" key="2">
    <source>
    </source>
</evidence>
<evidence type="ECO:0000305" key="3"/>
<evidence type="ECO:0007829" key="4">
    <source>
        <dbReference type="PDB" id="1VDH"/>
    </source>
</evidence>
<name>CHDC_THET8</name>
<reference key="1">
    <citation type="submission" date="2004-11" db="EMBL/GenBank/DDBJ databases">
        <title>Complete genome sequence of Thermus thermophilus HB8.</title>
        <authorList>
            <person name="Masui R."/>
            <person name="Kurokawa K."/>
            <person name="Nakagawa N."/>
            <person name="Tokunaga F."/>
            <person name="Koyama Y."/>
            <person name="Shibata T."/>
            <person name="Oshima T."/>
            <person name="Yokoyama S."/>
            <person name="Yasunaga T."/>
            <person name="Kuramitsu S."/>
        </authorList>
    </citation>
    <scope>NUCLEOTIDE SEQUENCE [LARGE SCALE GENOMIC DNA]</scope>
    <source>
        <strain>ATCC 27634 / DSM 579 / HB8</strain>
    </source>
</reference>
<reference key="2">
    <citation type="journal article" date="2005" name="J. Struct. Funct. Genomics">
        <title>Structure-based functional identification of a novel heme-binding protein from Thermus thermophilus HB8.</title>
        <authorList>
            <person name="Ebihara A."/>
            <person name="Okamoto A."/>
            <person name="Kousumi Y."/>
            <person name="Yamamoto H."/>
            <person name="Masui R."/>
            <person name="Ueyama N."/>
            <person name="Yokoyama S."/>
            <person name="Kuramitsu S."/>
        </authorList>
    </citation>
    <scope>X-RAY CRYSTALLOGRAPHY (2.00 ANGSTROMS)</scope>
    <scope>SUBUNIT</scope>
    <scope>FUNCTION</scope>
    <scope>BIOPHYSICOCHEMICAL PROPERTIES</scope>
    <scope>COFACTOR</scope>
</reference>
<feature type="chain" id="PRO_0000294059" description="Coproheme decarboxylase">
    <location>
        <begin position="1"/>
        <end position="249"/>
    </location>
</feature>
<feature type="active site" evidence="1">
    <location>
        <position position="145"/>
    </location>
</feature>
<feature type="binding site" evidence="1">
    <location>
        <position position="131"/>
    </location>
    <ligand>
        <name>Fe-coproporphyrin III</name>
        <dbReference type="ChEBI" id="CHEBI:68438"/>
    </ligand>
</feature>
<feature type="binding site" evidence="1">
    <location>
        <begin position="145"/>
        <end position="149"/>
    </location>
    <ligand>
        <name>Fe-coproporphyrin III</name>
        <dbReference type="ChEBI" id="CHEBI:68438"/>
    </ligand>
</feature>
<feature type="binding site" description="axial binding residue" evidence="1">
    <location>
        <position position="172"/>
    </location>
    <ligand>
        <name>Fe-coproporphyrin III</name>
        <dbReference type="ChEBI" id="CHEBI:68438"/>
    </ligand>
    <ligandPart>
        <name>Fe</name>
        <dbReference type="ChEBI" id="CHEBI:18248"/>
    </ligandPart>
</feature>
<feature type="binding site" evidence="1">
    <location>
        <position position="185"/>
    </location>
    <ligand>
        <name>Fe-coproporphyrin III</name>
        <dbReference type="ChEBI" id="CHEBI:68438"/>
    </ligand>
</feature>
<feature type="binding site" evidence="1">
    <location>
        <position position="223"/>
    </location>
    <ligand>
        <name>Fe-coproporphyrin III</name>
        <dbReference type="ChEBI" id="CHEBI:68438"/>
    </ligand>
</feature>
<feature type="strand" evidence="4">
    <location>
        <begin position="10"/>
        <end position="24"/>
    </location>
</feature>
<feature type="helix" evidence="4">
    <location>
        <begin position="26"/>
        <end position="31"/>
    </location>
</feature>
<feature type="helix" evidence="4">
    <location>
        <begin position="34"/>
        <end position="56"/>
    </location>
</feature>
<feature type="strand" evidence="4">
    <location>
        <begin position="61"/>
        <end position="67"/>
    </location>
</feature>
<feature type="strand" evidence="4">
    <location>
        <begin position="73"/>
        <end position="82"/>
    </location>
</feature>
<feature type="helix" evidence="4">
    <location>
        <begin position="83"/>
        <end position="95"/>
    </location>
</feature>
<feature type="helix" evidence="4">
    <location>
        <begin position="98"/>
        <end position="101"/>
    </location>
</feature>
<feature type="strand" evidence="4">
    <location>
        <begin position="102"/>
        <end position="119"/>
    </location>
</feature>
<feature type="turn" evidence="4">
    <location>
        <begin position="126"/>
        <end position="128"/>
    </location>
</feature>
<feature type="helix" evidence="4">
    <location>
        <begin position="129"/>
        <end position="132"/>
    </location>
</feature>
<feature type="strand" evidence="4">
    <location>
        <begin position="138"/>
        <end position="149"/>
    </location>
</feature>
<feature type="helix" evidence="4">
    <location>
        <begin position="157"/>
        <end position="159"/>
    </location>
</feature>
<feature type="helix" evidence="4">
    <location>
        <begin position="162"/>
        <end position="177"/>
    </location>
</feature>
<feature type="turn" evidence="4">
    <location>
        <begin position="178"/>
        <end position="182"/>
    </location>
</feature>
<feature type="strand" evidence="4">
    <location>
        <begin position="184"/>
        <end position="189"/>
    </location>
</feature>
<feature type="turn" evidence="4">
    <location>
        <begin position="191"/>
        <end position="193"/>
    </location>
</feature>
<feature type="strand" evidence="4">
    <location>
        <begin position="194"/>
        <end position="205"/>
    </location>
</feature>
<feature type="helix" evidence="4">
    <location>
        <begin position="207"/>
        <end position="217"/>
    </location>
</feature>
<feature type="helix" evidence="4">
    <location>
        <begin position="221"/>
        <end position="226"/>
    </location>
</feature>
<feature type="strand" evidence="4">
    <location>
        <begin position="227"/>
        <end position="229"/>
    </location>
</feature>
<feature type="strand" evidence="4">
    <location>
        <begin position="233"/>
        <end position="237"/>
    </location>
</feature>
<feature type="helix" evidence="4">
    <location>
        <begin position="240"/>
        <end position="246"/>
    </location>
</feature>
<comment type="function">
    <text evidence="1 2">Involved in coproporphyrin-dependent heme b biosynthesis. Catalyzes the decarboxylation of Fe-coproporphyrin III (coproheme) to heme b (protoheme IX), the last step of the pathway. The reaction occurs in a stepwise manner with a three-propionate harderoheme intermediate (By similarity). When reconstituted with heme, can generate oxygen using chlorite or hydrogen peroxide as substrate (in vitro), but has very low affinity for hydrogen peroxide and chlorite and extremely low enzyme activity (PubMed:15965735).</text>
</comment>
<comment type="catalytic activity">
    <reaction evidence="1">
        <text>Fe-coproporphyrin III + 2 H2O2 + 2 H(+) = heme b + 2 CO2 + 4 H2O</text>
        <dbReference type="Rhea" id="RHEA:56516"/>
        <dbReference type="ChEBI" id="CHEBI:15377"/>
        <dbReference type="ChEBI" id="CHEBI:15378"/>
        <dbReference type="ChEBI" id="CHEBI:16240"/>
        <dbReference type="ChEBI" id="CHEBI:16526"/>
        <dbReference type="ChEBI" id="CHEBI:60344"/>
        <dbReference type="ChEBI" id="CHEBI:68438"/>
        <dbReference type="EC" id="1.3.98.5"/>
    </reaction>
    <physiologicalReaction direction="left-to-right" evidence="1">
        <dbReference type="Rhea" id="RHEA:56517"/>
    </physiologicalReaction>
</comment>
<comment type="catalytic activity">
    <reaction evidence="1">
        <text>Fe-coproporphyrin III + H2O2 + H(+) = harderoheme III + CO2 + 2 H2O</text>
        <dbReference type="Rhea" id="RHEA:57940"/>
        <dbReference type="ChEBI" id="CHEBI:15377"/>
        <dbReference type="ChEBI" id="CHEBI:15378"/>
        <dbReference type="ChEBI" id="CHEBI:16240"/>
        <dbReference type="ChEBI" id="CHEBI:16526"/>
        <dbReference type="ChEBI" id="CHEBI:68438"/>
        <dbReference type="ChEBI" id="CHEBI:142463"/>
    </reaction>
    <physiologicalReaction direction="left-to-right" evidence="1">
        <dbReference type="Rhea" id="RHEA:57941"/>
    </physiologicalReaction>
</comment>
<comment type="catalytic activity">
    <reaction evidence="1">
        <text>harderoheme III + H2O2 + H(+) = heme b + CO2 + 2 H2O</text>
        <dbReference type="Rhea" id="RHEA:57944"/>
        <dbReference type="ChEBI" id="CHEBI:15377"/>
        <dbReference type="ChEBI" id="CHEBI:15378"/>
        <dbReference type="ChEBI" id="CHEBI:16240"/>
        <dbReference type="ChEBI" id="CHEBI:16526"/>
        <dbReference type="ChEBI" id="CHEBI:60344"/>
        <dbReference type="ChEBI" id="CHEBI:142463"/>
    </reaction>
    <physiologicalReaction direction="left-to-right" evidence="1">
        <dbReference type="Rhea" id="RHEA:57945"/>
    </physiologicalReaction>
</comment>
<comment type="cofactor">
    <cofactor evidence="1">
        <name>Fe-coproporphyrin III</name>
        <dbReference type="ChEBI" id="CHEBI:68438"/>
    </cofactor>
    <text evidence="1 2">Fe-coproporphyrin III acts both as a substrate and a redox cofactor (By similarity). Was originally thought to use heme as a cofactor (PubMed:15965735).</text>
</comment>
<comment type="biophysicochemical properties">
    <kinetics>
        <KM evidence="2">13 mM for chlorite</KM>
        <KM evidence="2">25 mM for hydrogen peroxide</KM>
        <text>kcat is 0.77 sec(-1) with chlorite and 0.52 sec(-1) with hydrogen peroxide. The kcat values are at least 1000 times lower than those observed for well-characterized chlorite dismutases, and the specific activity is even lower.</text>
    </kinetics>
</comment>
<comment type="pathway">
    <text evidence="1">Porphyrin-containing compound metabolism; protoheme biosynthesis.</text>
</comment>
<comment type="subunit">
    <text evidence="2">Homopentamer.</text>
</comment>
<comment type="similarity">
    <text evidence="1 3">Belongs to the ChdC family. Type 1 subfamily.</text>
</comment>
<gene>
    <name evidence="1" type="primary">chdC</name>
    <name type="ordered locus">TTHA1714</name>
</gene>
<proteinExistence type="evidence at protein level"/>
<keyword id="KW-0002">3D-structure</keyword>
<keyword id="KW-0349">Heme</keyword>
<keyword id="KW-0350">Heme biosynthesis</keyword>
<keyword id="KW-0408">Iron</keyword>
<keyword id="KW-0479">Metal-binding</keyword>
<keyword id="KW-0560">Oxidoreductase</keyword>
<keyword id="KW-1185">Reference proteome</keyword>
<dbReference type="EC" id="1.3.98.5" evidence="1"/>
<dbReference type="EMBL" id="AP008226">
    <property type="protein sequence ID" value="BAD71537.1"/>
    <property type="molecule type" value="Genomic_DNA"/>
</dbReference>
<dbReference type="RefSeq" id="YP_144980.1">
    <property type="nucleotide sequence ID" value="NC_006461.1"/>
</dbReference>
<dbReference type="PDB" id="1VDH">
    <property type="method" value="X-ray"/>
    <property type="resolution" value="2.00 A"/>
    <property type="chains" value="A/B/C/D/E=1-249"/>
</dbReference>
<dbReference type="PDBsum" id="1VDH"/>
<dbReference type="SMR" id="Q5SHL6"/>
<dbReference type="EnsemblBacteria" id="BAD71537">
    <property type="protein sequence ID" value="BAD71537"/>
    <property type="gene ID" value="BAD71537"/>
</dbReference>
<dbReference type="GeneID" id="3169367"/>
<dbReference type="KEGG" id="ttj:TTHA1714"/>
<dbReference type="PATRIC" id="fig|300852.9.peg.1684"/>
<dbReference type="eggNOG" id="COG3253">
    <property type="taxonomic scope" value="Bacteria"/>
</dbReference>
<dbReference type="HOGENOM" id="CLU_063226_1_0_0"/>
<dbReference type="PhylomeDB" id="Q5SHL6"/>
<dbReference type="UniPathway" id="UPA00252"/>
<dbReference type="EvolutionaryTrace" id="Q5SHL6"/>
<dbReference type="Proteomes" id="UP000000532">
    <property type="component" value="Chromosome"/>
</dbReference>
<dbReference type="GO" id="GO:0020037">
    <property type="term" value="F:heme binding"/>
    <property type="evidence" value="ECO:0007669"/>
    <property type="project" value="InterPro"/>
</dbReference>
<dbReference type="GO" id="GO:0046872">
    <property type="term" value="F:metal ion binding"/>
    <property type="evidence" value="ECO:0007669"/>
    <property type="project" value="UniProtKB-KW"/>
</dbReference>
<dbReference type="GO" id="GO:0004601">
    <property type="term" value="F:peroxidase activity"/>
    <property type="evidence" value="ECO:0007669"/>
    <property type="project" value="InterPro"/>
</dbReference>
<dbReference type="GO" id="GO:0006783">
    <property type="term" value="P:heme biosynthetic process"/>
    <property type="evidence" value="ECO:0007669"/>
    <property type="project" value="UniProtKB-KW"/>
</dbReference>
<dbReference type="Gene3D" id="3.30.70.1030">
    <property type="entry name" value="Apc35880, domain 1"/>
    <property type="match status" value="2"/>
</dbReference>
<dbReference type="HAMAP" id="MF_01442">
    <property type="entry name" value="Coproheme_decarbox_1"/>
    <property type="match status" value="1"/>
</dbReference>
<dbReference type="InterPro" id="IPR031332">
    <property type="entry name" value="CHDC"/>
</dbReference>
<dbReference type="InterPro" id="IPR010644">
    <property type="entry name" value="ChdC/CLD"/>
</dbReference>
<dbReference type="InterPro" id="IPR011008">
    <property type="entry name" value="Dimeric_a/b-barrel"/>
</dbReference>
<dbReference type="NCBIfam" id="NF008913">
    <property type="entry name" value="PRK12276.1"/>
    <property type="match status" value="1"/>
</dbReference>
<dbReference type="PANTHER" id="PTHR36843:SF1">
    <property type="entry name" value="COPROHEME DECARBOXYLASE"/>
    <property type="match status" value="1"/>
</dbReference>
<dbReference type="PANTHER" id="PTHR36843">
    <property type="entry name" value="HEME-DEPENDENT PEROXIDASE YWFI-RELATED"/>
    <property type="match status" value="1"/>
</dbReference>
<dbReference type="Pfam" id="PF06778">
    <property type="entry name" value="Chlor_dismutase"/>
    <property type="match status" value="1"/>
</dbReference>
<dbReference type="SUPFAM" id="SSF54909">
    <property type="entry name" value="Dimeric alpha+beta barrel"/>
    <property type="match status" value="1"/>
</dbReference>